<name>C8_VACCC</name>
<reference key="1">
    <citation type="journal article" date="1990" name="Virology">
        <title>The complete DNA sequence of vaccinia virus.</title>
        <authorList>
            <person name="Goebel S.J."/>
            <person name="Johnson G.P."/>
            <person name="Perkus M.E."/>
            <person name="Davis S.W."/>
            <person name="Winslow J.P."/>
            <person name="Paoletti E."/>
        </authorList>
    </citation>
    <scope>NUCLEOTIDE SEQUENCE [LARGE SCALE GENOMIC DNA]</scope>
</reference>
<dbReference type="EMBL" id="M35027">
    <property type="protein sequence ID" value="AAA47990.1"/>
    <property type="molecule type" value="Genomic_DNA"/>
</dbReference>
<dbReference type="PIR" id="F42503">
    <property type="entry name" value="F42503"/>
</dbReference>
<dbReference type="Proteomes" id="UP000008269">
    <property type="component" value="Segment"/>
</dbReference>
<dbReference type="InterPro" id="IPR010806">
    <property type="entry name" value="Poxvirus_TNF-rcpt-II_C"/>
</dbReference>
<dbReference type="InterPro" id="IPR009176">
    <property type="entry name" value="Vaccinia_virus_B7/C8"/>
</dbReference>
<dbReference type="Pfam" id="PF07190">
    <property type="entry name" value="CrmD_SECRET"/>
    <property type="match status" value="1"/>
</dbReference>
<dbReference type="PIRSF" id="PIRSF003778">
    <property type="entry name" value="VAC_C8L"/>
    <property type="match status" value="1"/>
</dbReference>
<feature type="signal peptide" evidence="1">
    <location>
        <begin position="1"/>
        <end position="21"/>
    </location>
</feature>
<feature type="chain" id="PRO_0000099406" description="Protein C8">
    <location>
        <begin position="22"/>
        <end position="184"/>
    </location>
</feature>
<accession>P21041</accession>
<organism>
    <name type="scientific">Vaccinia virus (strain Copenhagen)</name>
    <name type="common">VACV</name>
    <dbReference type="NCBI Taxonomy" id="10249"/>
    <lineage>
        <taxon>Viruses</taxon>
        <taxon>Varidnaviria</taxon>
        <taxon>Bamfordvirae</taxon>
        <taxon>Nucleocytoviricota</taxon>
        <taxon>Pokkesviricetes</taxon>
        <taxon>Chitovirales</taxon>
        <taxon>Poxviridae</taxon>
        <taxon>Chordopoxvirinae</taxon>
        <taxon>Orthopoxvirus</taxon>
        <taxon>Vaccinia virus</taxon>
    </lineage>
</organism>
<gene>
    <name type="ORF">C8L</name>
</gene>
<proteinExistence type="inferred from homology"/>
<protein>
    <recommendedName>
        <fullName>Protein C8</fullName>
    </recommendedName>
</protein>
<sequence>MSSIRFIACLYLISIFGNCHEDPYYQPFDKLNITLDIYTYEDLVPYTVDNDLPNPNDDTTSFVKIYFKNFWITVMTKWCAPFIDTVSVYTSHDNLNIQFYSRDEYDTQSEDKICTIDVKARCKHLTKREVTVQKEAYRYSLSSDLSCFDSIDLDIDLIETNSTDTTVLKSYELMLPKRAKSIHN</sequence>
<keyword id="KW-0244">Early protein</keyword>
<keyword id="KW-1185">Reference proteome</keyword>
<keyword id="KW-0732">Signal</keyword>
<organismHost>
    <name type="scientific">Homo sapiens</name>
    <name type="common">Human</name>
    <dbReference type="NCBI Taxonomy" id="9606"/>
</organismHost>
<evidence type="ECO:0000255" key="1"/>
<evidence type="ECO:0000305" key="2"/>
<comment type="similarity">
    <text evidence="2">Belongs to the poxviridae C8 protein family.</text>
</comment>